<accession>Q9LXE1</accession>
<accession>Q9FXW7</accession>
<evidence type="ECO:0000255" key="1">
    <source>
        <dbReference type="PROSITE-ProRule" id="PRU00326"/>
    </source>
</evidence>
<evidence type="ECO:0000256" key="2">
    <source>
        <dbReference type="SAM" id="MobiDB-lite"/>
    </source>
</evidence>
<evidence type="ECO:0000305" key="3"/>
<keyword id="KW-0238">DNA-binding</keyword>
<keyword id="KW-0539">Nucleus</keyword>
<keyword id="KW-1185">Reference proteome</keyword>
<keyword id="KW-0677">Repeat</keyword>
<keyword id="KW-0804">Transcription</keyword>
<keyword id="KW-0805">Transcription regulation</keyword>
<comment type="subcellular location">
    <subcellularLocation>
        <location evidence="1">Nucleus</location>
    </subcellularLocation>
</comment>
<comment type="sequence caution" evidence="3">
    <conflict type="erroneous gene model prediction">
        <sequence resource="EMBL-CDS" id="BAB09536"/>
    </conflict>
</comment>
<protein>
    <recommendedName>
        <fullName>B3 domain-containing protein REM23</fullName>
    </recommendedName>
    <alternativeName>
        <fullName>Protein REPRODUCTIVE MERISTEM 23</fullName>
    </alternativeName>
</protein>
<reference key="1">
    <citation type="journal article" date="1999" name="DNA Res.">
        <title>Structural analysis of Arabidopsis thaliana chromosome 5. IX. Sequence features of the regions of 1,011,550 bp covered by seventeen P1 and TAC clones.</title>
        <authorList>
            <person name="Kaneko T."/>
            <person name="Katoh T."/>
            <person name="Sato S."/>
            <person name="Nakamura Y."/>
            <person name="Asamizu E."/>
            <person name="Kotani H."/>
            <person name="Miyajima N."/>
            <person name="Tabata S."/>
        </authorList>
    </citation>
    <scope>NUCLEOTIDE SEQUENCE [LARGE SCALE GENOMIC DNA]</scope>
    <source>
        <strain>cv. Columbia</strain>
    </source>
</reference>
<reference key="2">
    <citation type="journal article" date="2000" name="Nature">
        <title>Sequence and analysis of chromosome 5 of the plant Arabidopsis thaliana.</title>
        <authorList>
            <person name="Tabata S."/>
            <person name="Kaneko T."/>
            <person name="Nakamura Y."/>
            <person name="Kotani H."/>
            <person name="Kato T."/>
            <person name="Asamizu E."/>
            <person name="Miyajima N."/>
            <person name="Sasamoto S."/>
            <person name="Kimura T."/>
            <person name="Hosouchi T."/>
            <person name="Kawashima K."/>
            <person name="Kohara M."/>
            <person name="Matsumoto M."/>
            <person name="Matsuno A."/>
            <person name="Muraki A."/>
            <person name="Nakayama S."/>
            <person name="Nakazaki N."/>
            <person name="Naruo K."/>
            <person name="Okumura S."/>
            <person name="Shinpo S."/>
            <person name="Takeuchi C."/>
            <person name="Wada T."/>
            <person name="Watanabe A."/>
            <person name="Yamada M."/>
            <person name="Yasuda M."/>
            <person name="Sato S."/>
            <person name="de la Bastide M."/>
            <person name="Huang E."/>
            <person name="Spiegel L."/>
            <person name="Gnoj L."/>
            <person name="O'Shaughnessy A."/>
            <person name="Preston R."/>
            <person name="Habermann K."/>
            <person name="Murray J."/>
            <person name="Johnson D."/>
            <person name="Rohlfing T."/>
            <person name="Nelson J."/>
            <person name="Stoneking T."/>
            <person name="Pepin K."/>
            <person name="Spieth J."/>
            <person name="Sekhon M."/>
            <person name="Armstrong J."/>
            <person name="Becker M."/>
            <person name="Belter E."/>
            <person name="Cordum H."/>
            <person name="Cordes M."/>
            <person name="Courtney L."/>
            <person name="Courtney W."/>
            <person name="Dante M."/>
            <person name="Du H."/>
            <person name="Edwards J."/>
            <person name="Fryman J."/>
            <person name="Haakensen B."/>
            <person name="Lamar E."/>
            <person name="Latreille P."/>
            <person name="Leonard S."/>
            <person name="Meyer R."/>
            <person name="Mulvaney E."/>
            <person name="Ozersky P."/>
            <person name="Riley A."/>
            <person name="Strowmatt C."/>
            <person name="Wagner-McPherson C."/>
            <person name="Wollam A."/>
            <person name="Yoakum M."/>
            <person name="Bell M."/>
            <person name="Dedhia N."/>
            <person name="Parnell L."/>
            <person name="Shah R."/>
            <person name="Rodriguez M."/>
            <person name="Hoon See L."/>
            <person name="Vil D."/>
            <person name="Baker J."/>
            <person name="Kirchoff K."/>
            <person name="Toth K."/>
            <person name="King L."/>
            <person name="Bahret A."/>
            <person name="Miller B."/>
            <person name="Marra M.A."/>
            <person name="Martienssen R."/>
            <person name="McCombie W.R."/>
            <person name="Wilson R.K."/>
            <person name="Murphy G."/>
            <person name="Bancroft I."/>
            <person name="Volckaert G."/>
            <person name="Wambutt R."/>
            <person name="Duesterhoeft A."/>
            <person name="Stiekema W."/>
            <person name="Pohl T."/>
            <person name="Entian K.-D."/>
            <person name="Terryn N."/>
            <person name="Hartley N."/>
            <person name="Bent E."/>
            <person name="Johnson S."/>
            <person name="Langham S.-A."/>
            <person name="McCullagh B."/>
            <person name="Robben J."/>
            <person name="Grymonprez B."/>
            <person name="Zimmermann W."/>
            <person name="Ramsperger U."/>
            <person name="Wedler H."/>
            <person name="Balke K."/>
            <person name="Wedler E."/>
            <person name="Peters S."/>
            <person name="van Staveren M."/>
            <person name="Dirkse W."/>
            <person name="Mooijman P."/>
            <person name="Klein Lankhorst R."/>
            <person name="Weitzenegger T."/>
            <person name="Bothe G."/>
            <person name="Rose M."/>
            <person name="Hauf J."/>
            <person name="Berneiser S."/>
            <person name="Hempel S."/>
            <person name="Feldpausch M."/>
            <person name="Lamberth S."/>
            <person name="Villarroel R."/>
            <person name="Gielen J."/>
            <person name="Ardiles W."/>
            <person name="Bents O."/>
            <person name="Lemcke K."/>
            <person name="Kolesov G."/>
            <person name="Mayer K.F.X."/>
            <person name="Rudd S."/>
            <person name="Schoof H."/>
            <person name="Schueller C."/>
            <person name="Zaccaria P."/>
            <person name="Mewes H.-W."/>
            <person name="Bevan M."/>
            <person name="Fransz P.F."/>
        </authorList>
    </citation>
    <scope>NUCLEOTIDE SEQUENCE [LARGE SCALE GENOMIC DNA]</scope>
    <source>
        <strain>cv. Columbia</strain>
    </source>
</reference>
<reference key="3">
    <citation type="journal article" date="2017" name="Plant J.">
        <title>Araport11: a complete reannotation of the Arabidopsis thaliana reference genome.</title>
        <authorList>
            <person name="Cheng C.Y."/>
            <person name="Krishnakumar V."/>
            <person name="Chan A.P."/>
            <person name="Thibaud-Nissen F."/>
            <person name="Schobel S."/>
            <person name="Town C.D."/>
        </authorList>
    </citation>
    <scope>GENOME REANNOTATION</scope>
    <source>
        <strain>cv. Columbia</strain>
    </source>
</reference>
<reference key="4">
    <citation type="submission" date="2005-05" db="EMBL/GenBank/DDBJ databases">
        <authorList>
            <person name="Underwood B.A."/>
            <person name="Xiao Y.-L."/>
            <person name="Moskal W.A. Jr."/>
            <person name="Monaghan E.L."/>
            <person name="Wang W."/>
            <person name="Redman J.C."/>
            <person name="Wu H.C."/>
            <person name="Utterback T."/>
            <person name="Town C.D."/>
        </authorList>
    </citation>
    <scope>NUCLEOTIDE SEQUENCE [LARGE SCALE MRNA]</scope>
    <source>
        <strain>cv. Columbia</strain>
    </source>
</reference>
<reference key="5">
    <citation type="journal article" date="2008" name="Trends Plant Sci.">
        <title>The plant B3 superfamily.</title>
        <authorList>
            <person name="Swaminathan K."/>
            <person name="Peterson K."/>
            <person name="Jack T."/>
        </authorList>
    </citation>
    <scope>GENE FAMILY</scope>
</reference>
<gene>
    <name type="primary">REM23</name>
    <name type="ordered locus">At5g09780</name>
    <name type="ORF">F17I14.30</name>
</gene>
<proteinExistence type="evidence at transcript level"/>
<feature type="chain" id="PRO_0000375116" description="B3 domain-containing protein REM23">
    <location>
        <begin position="1"/>
        <end position="308"/>
    </location>
</feature>
<feature type="DNA-binding region" description="TF-B3 1" evidence="1">
    <location>
        <begin position="19"/>
        <end position="114"/>
    </location>
</feature>
<feature type="DNA-binding region" description="TF-B3 2" evidence="1">
    <location>
        <begin position="216"/>
        <end position="308"/>
    </location>
</feature>
<feature type="region of interest" description="Disordered" evidence="2">
    <location>
        <begin position="117"/>
        <end position="198"/>
    </location>
</feature>
<feature type="compositionally biased region" description="Polar residues" evidence="2">
    <location>
        <begin position="121"/>
        <end position="133"/>
    </location>
</feature>
<feature type="compositionally biased region" description="Basic and acidic residues" evidence="2">
    <location>
        <begin position="134"/>
        <end position="145"/>
    </location>
</feature>
<feature type="compositionally biased region" description="Polar residues" evidence="2">
    <location>
        <begin position="149"/>
        <end position="166"/>
    </location>
</feature>
<feature type="compositionally biased region" description="Basic residues" evidence="2">
    <location>
        <begin position="168"/>
        <end position="177"/>
    </location>
</feature>
<feature type="compositionally biased region" description="Basic and acidic residues" evidence="2">
    <location>
        <begin position="178"/>
        <end position="198"/>
    </location>
</feature>
<dbReference type="EMBL" id="AB020752">
    <property type="protein sequence ID" value="BAB09536.1"/>
    <property type="status" value="ALT_SEQ"/>
    <property type="molecule type" value="Genomic_DNA"/>
</dbReference>
<dbReference type="EMBL" id="AL353994">
    <property type="protein sequence ID" value="CAB89352.1"/>
    <property type="molecule type" value="Genomic_DNA"/>
</dbReference>
<dbReference type="EMBL" id="CP002688">
    <property type="protein sequence ID" value="AED91445.1"/>
    <property type="molecule type" value="Genomic_DNA"/>
</dbReference>
<dbReference type="EMBL" id="DQ056675">
    <property type="protein sequence ID" value="AAY78821.1"/>
    <property type="molecule type" value="mRNA"/>
</dbReference>
<dbReference type="PIR" id="T49920">
    <property type="entry name" value="T49920"/>
</dbReference>
<dbReference type="RefSeq" id="NP_196540.1">
    <property type="nucleotide sequence ID" value="NM_121015.2"/>
</dbReference>
<dbReference type="SMR" id="Q9LXE1"/>
<dbReference type="BioGRID" id="16116">
    <property type="interactions" value="6"/>
</dbReference>
<dbReference type="IntAct" id="Q9LXE1">
    <property type="interactions" value="6"/>
</dbReference>
<dbReference type="STRING" id="3702.Q9LXE1"/>
<dbReference type="GlyGen" id="Q9LXE1">
    <property type="glycosylation" value="1 site"/>
</dbReference>
<dbReference type="iPTMnet" id="Q9LXE1"/>
<dbReference type="PaxDb" id="3702-AT5G09780.1"/>
<dbReference type="EnsemblPlants" id="AT5G09780.1">
    <property type="protein sequence ID" value="AT5G09780.1"/>
    <property type="gene ID" value="AT5G09780"/>
</dbReference>
<dbReference type="GeneID" id="830838"/>
<dbReference type="Gramene" id="AT5G09780.1">
    <property type="protein sequence ID" value="AT5G09780.1"/>
    <property type="gene ID" value="AT5G09780"/>
</dbReference>
<dbReference type="KEGG" id="ath:AT5G09780"/>
<dbReference type="Araport" id="AT5G09780"/>
<dbReference type="TAIR" id="AT5G09780">
    <property type="gene designation" value="REM25"/>
</dbReference>
<dbReference type="HOGENOM" id="CLU_083136_0_0_1"/>
<dbReference type="InParanoid" id="Q9LXE1"/>
<dbReference type="OMA" id="LWCKEER"/>
<dbReference type="OrthoDB" id="1040181at2759"/>
<dbReference type="PhylomeDB" id="Q9LXE1"/>
<dbReference type="PRO" id="PR:Q9LXE1"/>
<dbReference type="Proteomes" id="UP000006548">
    <property type="component" value="Chromosome 5"/>
</dbReference>
<dbReference type="ExpressionAtlas" id="Q9LXE1">
    <property type="expression patterns" value="baseline and differential"/>
</dbReference>
<dbReference type="GO" id="GO:0005634">
    <property type="term" value="C:nucleus"/>
    <property type="evidence" value="ECO:0007669"/>
    <property type="project" value="UniProtKB-SubCell"/>
</dbReference>
<dbReference type="GO" id="GO:0003677">
    <property type="term" value="F:DNA binding"/>
    <property type="evidence" value="ECO:0007669"/>
    <property type="project" value="UniProtKB-KW"/>
</dbReference>
<dbReference type="CDD" id="cd10017">
    <property type="entry name" value="B3_DNA"/>
    <property type="match status" value="2"/>
</dbReference>
<dbReference type="Gene3D" id="2.40.330.10">
    <property type="entry name" value="DNA-binding pseudobarrel domain"/>
    <property type="match status" value="2"/>
</dbReference>
<dbReference type="InterPro" id="IPR003340">
    <property type="entry name" value="B3_DNA-bd"/>
</dbReference>
<dbReference type="InterPro" id="IPR015300">
    <property type="entry name" value="DNA-bd_pseudobarrel_sf"/>
</dbReference>
<dbReference type="InterPro" id="IPR050655">
    <property type="entry name" value="Plant_B3_domain"/>
</dbReference>
<dbReference type="PANTHER" id="PTHR31920">
    <property type="entry name" value="B3 DOMAIN-CONTAINING"/>
    <property type="match status" value="1"/>
</dbReference>
<dbReference type="PANTHER" id="PTHR31920:SF122">
    <property type="entry name" value="B3 DOMAIN-CONTAINING PROTEIN REM23"/>
    <property type="match status" value="1"/>
</dbReference>
<dbReference type="Pfam" id="PF02362">
    <property type="entry name" value="B3"/>
    <property type="match status" value="2"/>
</dbReference>
<dbReference type="SMART" id="SM01019">
    <property type="entry name" value="B3"/>
    <property type="match status" value="2"/>
</dbReference>
<dbReference type="SUPFAM" id="SSF101936">
    <property type="entry name" value="DNA-binding pseudobarrel domain"/>
    <property type="match status" value="2"/>
</dbReference>
<dbReference type="PROSITE" id="PS50863">
    <property type="entry name" value="B3"/>
    <property type="match status" value="2"/>
</dbReference>
<name>REM23_ARATH</name>
<organism>
    <name type="scientific">Arabidopsis thaliana</name>
    <name type="common">Mouse-ear cress</name>
    <dbReference type="NCBI Taxonomy" id="3702"/>
    <lineage>
        <taxon>Eukaryota</taxon>
        <taxon>Viridiplantae</taxon>
        <taxon>Streptophyta</taxon>
        <taxon>Embryophyta</taxon>
        <taxon>Tracheophyta</taxon>
        <taxon>Spermatophyta</taxon>
        <taxon>Magnoliopsida</taxon>
        <taxon>eudicotyledons</taxon>
        <taxon>Gunneridae</taxon>
        <taxon>Pentapetalae</taxon>
        <taxon>rosids</taxon>
        <taxon>malvids</taxon>
        <taxon>Brassicales</taxon>
        <taxon>Brassicaceae</taxon>
        <taxon>Camelineae</taxon>
        <taxon>Arabidopsis</taxon>
    </lineage>
</organism>
<sequence length="308" mass="35623">MASNPDFLWCKEERKQESFFKVLKRSDMSSEDTRAIPYDFVINFSDNELSGDMKFRVQWGNSWKVKISKNPRFYFMEKSGWEKFVIDNALGDHEFLTFTHKGQMSFTVKIFNKDGKEMMQPPQSRASFASSSRVKTEQDVKREEEVLVSSDSRSRGPTTAAETNRGGSYKRKLNFGKKKAEETQTYKRTERTQNSKRTERVVSKERVYAGEPSSSVAGFKIFISKSYIKSLAIPKPFGNYMPKEKTRVKIHHPDGEKTWKVVFVVKERGQIFSGGWKRLCKEYPVVFGDTCKFTLITPLELLLVVSKP</sequence>